<reference key="1">
    <citation type="submission" date="2006-03" db="EMBL/GenBank/DDBJ databases">
        <title>Complete sequence of Methylobacillus flagellatus KT.</title>
        <authorList>
            <consortium name="US DOE Joint Genome Institute"/>
            <person name="Copeland A."/>
            <person name="Lucas S."/>
            <person name="Lapidus A."/>
            <person name="Barry K."/>
            <person name="Detter J.C."/>
            <person name="Glavina del Rio T."/>
            <person name="Hammon N."/>
            <person name="Israni S."/>
            <person name="Dalin E."/>
            <person name="Tice H."/>
            <person name="Pitluck S."/>
            <person name="Brettin T."/>
            <person name="Bruce D."/>
            <person name="Han C."/>
            <person name="Tapia R."/>
            <person name="Saunders E."/>
            <person name="Gilna P."/>
            <person name="Schmutz J."/>
            <person name="Larimer F."/>
            <person name="Land M."/>
            <person name="Kyrpides N."/>
            <person name="Anderson I."/>
            <person name="Richardson P."/>
        </authorList>
    </citation>
    <scope>NUCLEOTIDE SEQUENCE [LARGE SCALE GENOMIC DNA]</scope>
    <source>
        <strain>ATCC 51484 / DSM 6875 / VKM B-1610 / KT</strain>
    </source>
</reference>
<proteinExistence type="inferred from homology"/>
<protein>
    <recommendedName>
        <fullName evidence="1">Small ribosomal subunit protein bS18</fullName>
    </recommendedName>
    <alternativeName>
        <fullName evidence="2">30S ribosomal protein S18</fullName>
    </alternativeName>
</protein>
<comment type="function">
    <text evidence="1">Binds as a heterodimer with protein bS6 to the central domain of the 16S rRNA, where it helps stabilize the platform of the 30S subunit.</text>
</comment>
<comment type="subunit">
    <text evidence="1">Part of the 30S ribosomal subunit. Forms a tight heterodimer with protein bS6.</text>
</comment>
<comment type="similarity">
    <text evidence="1">Belongs to the bacterial ribosomal protein bS18 family.</text>
</comment>
<evidence type="ECO:0000255" key="1">
    <source>
        <dbReference type="HAMAP-Rule" id="MF_00270"/>
    </source>
</evidence>
<evidence type="ECO:0000305" key="2"/>
<keyword id="KW-1185">Reference proteome</keyword>
<keyword id="KW-0687">Ribonucleoprotein</keyword>
<keyword id="KW-0689">Ribosomal protein</keyword>
<keyword id="KW-0694">RNA-binding</keyword>
<keyword id="KW-0699">rRNA-binding</keyword>
<gene>
    <name evidence="1" type="primary">rpsR</name>
    <name type="ordered locus">Mfla_1328</name>
</gene>
<feature type="chain" id="PRO_1000003534" description="Small ribosomal subunit protein bS18">
    <location>
        <begin position="1"/>
        <end position="75"/>
    </location>
</feature>
<name>RS18_METFK</name>
<dbReference type="EMBL" id="CP000284">
    <property type="protein sequence ID" value="ABE49596.1"/>
    <property type="molecule type" value="Genomic_DNA"/>
</dbReference>
<dbReference type="RefSeq" id="WP_011479550.1">
    <property type="nucleotide sequence ID" value="NC_007947.1"/>
</dbReference>
<dbReference type="SMR" id="Q1H1P1"/>
<dbReference type="STRING" id="265072.Mfla_1328"/>
<dbReference type="KEGG" id="mfa:Mfla_1328"/>
<dbReference type="eggNOG" id="COG0238">
    <property type="taxonomic scope" value="Bacteria"/>
</dbReference>
<dbReference type="HOGENOM" id="CLU_148710_2_2_4"/>
<dbReference type="OrthoDB" id="9812008at2"/>
<dbReference type="Proteomes" id="UP000002440">
    <property type="component" value="Chromosome"/>
</dbReference>
<dbReference type="GO" id="GO:0022627">
    <property type="term" value="C:cytosolic small ribosomal subunit"/>
    <property type="evidence" value="ECO:0007669"/>
    <property type="project" value="TreeGrafter"/>
</dbReference>
<dbReference type="GO" id="GO:0070181">
    <property type="term" value="F:small ribosomal subunit rRNA binding"/>
    <property type="evidence" value="ECO:0007669"/>
    <property type="project" value="TreeGrafter"/>
</dbReference>
<dbReference type="GO" id="GO:0003735">
    <property type="term" value="F:structural constituent of ribosome"/>
    <property type="evidence" value="ECO:0007669"/>
    <property type="project" value="InterPro"/>
</dbReference>
<dbReference type="GO" id="GO:0006412">
    <property type="term" value="P:translation"/>
    <property type="evidence" value="ECO:0007669"/>
    <property type="project" value="UniProtKB-UniRule"/>
</dbReference>
<dbReference type="Gene3D" id="4.10.640.10">
    <property type="entry name" value="Ribosomal protein S18"/>
    <property type="match status" value="1"/>
</dbReference>
<dbReference type="HAMAP" id="MF_00270">
    <property type="entry name" value="Ribosomal_bS18"/>
    <property type="match status" value="1"/>
</dbReference>
<dbReference type="InterPro" id="IPR001648">
    <property type="entry name" value="Ribosomal_bS18"/>
</dbReference>
<dbReference type="InterPro" id="IPR018275">
    <property type="entry name" value="Ribosomal_bS18_CS"/>
</dbReference>
<dbReference type="InterPro" id="IPR036870">
    <property type="entry name" value="Ribosomal_bS18_sf"/>
</dbReference>
<dbReference type="NCBIfam" id="TIGR00165">
    <property type="entry name" value="S18"/>
    <property type="match status" value="1"/>
</dbReference>
<dbReference type="PANTHER" id="PTHR13479">
    <property type="entry name" value="30S RIBOSOMAL PROTEIN S18"/>
    <property type="match status" value="1"/>
</dbReference>
<dbReference type="PANTHER" id="PTHR13479:SF40">
    <property type="entry name" value="SMALL RIBOSOMAL SUBUNIT PROTEIN BS18M"/>
    <property type="match status" value="1"/>
</dbReference>
<dbReference type="Pfam" id="PF01084">
    <property type="entry name" value="Ribosomal_S18"/>
    <property type="match status" value="1"/>
</dbReference>
<dbReference type="PRINTS" id="PR00974">
    <property type="entry name" value="RIBOSOMALS18"/>
</dbReference>
<dbReference type="SUPFAM" id="SSF46911">
    <property type="entry name" value="Ribosomal protein S18"/>
    <property type="match status" value="1"/>
</dbReference>
<dbReference type="PROSITE" id="PS00057">
    <property type="entry name" value="RIBOSOMAL_S18"/>
    <property type="match status" value="1"/>
</dbReference>
<organism>
    <name type="scientific">Methylobacillus flagellatus (strain ATCC 51484 / DSM 6875 / VKM B-1610 / KT)</name>
    <dbReference type="NCBI Taxonomy" id="265072"/>
    <lineage>
        <taxon>Bacteria</taxon>
        <taxon>Pseudomonadati</taxon>
        <taxon>Pseudomonadota</taxon>
        <taxon>Betaproteobacteria</taxon>
        <taxon>Nitrosomonadales</taxon>
        <taxon>Methylophilaceae</taxon>
        <taxon>Methylobacillus</taxon>
    </lineage>
</organism>
<sequence>MARDMFKRRRYCRFSAEGIKQVDYKDVDLLKDFINENGKIIPARITGTKAKYQRQLTTAVKRARFLALLPYTDKH</sequence>
<accession>Q1H1P1</accession>